<comment type="function">
    <text evidence="1">Specifically methylates the adenine in position 37 of tRNA(1)(Val) (anticodon cmo5UAC).</text>
</comment>
<comment type="catalytic activity">
    <reaction evidence="1">
        <text>adenosine(37) in tRNA1(Val) + S-adenosyl-L-methionine = N(6)-methyladenosine(37) in tRNA1(Val) + S-adenosyl-L-homocysteine + H(+)</text>
        <dbReference type="Rhea" id="RHEA:43160"/>
        <dbReference type="Rhea" id="RHEA-COMP:10369"/>
        <dbReference type="Rhea" id="RHEA-COMP:10370"/>
        <dbReference type="ChEBI" id="CHEBI:15378"/>
        <dbReference type="ChEBI" id="CHEBI:57856"/>
        <dbReference type="ChEBI" id="CHEBI:59789"/>
        <dbReference type="ChEBI" id="CHEBI:74411"/>
        <dbReference type="ChEBI" id="CHEBI:74449"/>
        <dbReference type="EC" id="2.1.1.223"/>
    </reaction>
</comment>
<comment type="subcellular location">
    <subcellularLocation>
        <location evidence="1">Cytoplasm</location>
    </subcellularLocation>
</comment>
<comment type="similarity">
    <text evidence="1">Belongs to the methyltransferase superfamily. tRNA (adenine-N(6)-)-methyltransferase family.</text>
</comment>
<gene>
    <name type="ordered locus">VIBHAR_00953</name>
</gene>
<proteinExistence type="inferred from homology"/>
<keyword id="KW-0963">Cytoplasm</keyword>
<keyword id="KW-0489">Methyltransferase</keyword>
<keyword id="KW-0949">S-adenosyl-L-methionine</keyword>
<keyword id="KW-0808">Transferase</keyword>
<keyword id="KW-0819">tRNA processing</keyword>
<name>TRMN6_VIBC1</name>
<sequence>MKSERIQTKGFKFKQFSIHGGESGMPVSTDGVMLGAWVNCIPQNKILDIGTGTGLLALMCAQRFPSAQITALDIEITAIEAAKQNFAQSTWSDRLSLHHSDVLQFEPEHRFERIICNPPYFNSGEQSKQSQRATARHTDTLQHSALLNRCHELLTNEGTASFVLPITEGEQFITMALQQGWHLSRLCRVQPSQKKPVHRLLFELAKQACDTQETHLIIHSSEGYSDDFTQLTREFYLKM</sequence>
<reference key="1">
    <citation type="submission" date="2007-08" db="EMBL/GenBank/DDBJ databases">
        <authorList>
            <consortium name="The Vibrio harveyi Genome Sequencing Project"/>
            <person name="Bassler B."/>
            <person name="Clifton S.W."/>
            <person name="Fulton L."/>
            <person name="Delehaunty K."/>
            <person name="Fronick C."/>
            <person name="Harrison M."/>
            <person name="Markivic C."/>
            <person name="Fulton R."/>
            <person name="Tin-Wollam A.-M."/>
            <person name="Shah N."/>
            <person name="Pepin K."/>
            <person name="Nash W."/>
            <person name="Thiruvilangam P."/>
            <person name="Bhonagiri V."/>
            <person name="Waters C."/>
            <person name="Tu K.C."/>
            <person name="Irgon J."/>
            <person name="Wilson R.K."/>
        </authorList>
    </citation>
    <scope>NUCLEOTIDE SEQUENCE [LARGE SCALE GENOMIC DNA]</scope>
    <source>
        <strain>ATCC BAA-1116 / BB120</strain>
    </source>
</reference>
<dbReference type="EC" id="2.1.1.223" evidence="1"/>
<dbReference type="EMBL" id="CP000789">
    <property type="protein sequence ID" value="ABU69952.1"/>
    <property type="molecule type" value="Genomic_DNA"/>
</dbReference>
<dbReference type="RefSeq" id="WP_012127025.1">
    <property type="nucleotide sequence ID" value="NC_009783.1"/>
</dbReference>
<dbReference type="SMR" id="A7MXM2"/>
<dbReference type="KEGG" id="vha:VIBHAR_00953"/>
<dbReference type="PATRIC" id="fig|338187.25.peg.1668"/>
<dbReference type="Proteomes" id="UP000008152">
    <property type="component" value="Chromosome I"/>
</dbReference>
<dbReference type="GO" id="GO:0005737">
    <property type="term" value="C:cytoplasm"/>
    <property type="evidence" value="ECO:0007669"/>
    <property type="project" value="UniProtKB-SubCell"/>
</dbReference>
<dbReference type="GO" id="GO:0003676">
    <property type="term" value="F:nucleic acid binding"/>
    <property type="evidence" value="ECO:0007669"/>
    <property type="project" value="InterPro"/>
</dbReference>
<dbReference type="GO" id="GO:0016430">
    <property type="term" value="F:tRNA (adenine-N6)-methyltransferase activity"/>
    <property type="evidence" value="ECO:0007669"/>
    <property type="project" value="UniProtKB-UniRule"/>
</dbReference>
<dbReference type="GO" id="GO:0032259">
    <property type="term" value="P:methylation"/>
    <property type="evidence" value="ECO:0007669"/>
    <property type="project" value="UniProtKB-KW"/>
</dbReference>
<dbReference type="GO" id="GO:0008033">
    <property type="term" value="P:tRNA processing"/>
    <property type="evidence" value="ECO:0007669"/>
    <property type="project" value="UniProtKB-UniRule"/>
</dbReference>
<dbReference type="CDD" id="cd02440">
    <property type="entry name" value="AdoMet_MTases"/>
    <property type="match status" value="1"/>
</dbReference>
<dbReference type="Gene3D" id="3.40.50.150">
    <property type="entry name" value="Vaccinia Virus protein VP39"/>
    <property type="match status" value="1"/>
</dbReference>
<dbReference type="HAMAP" id="MF_01872">
    <property type="entry name" value="tRNA_methyltr_YfiC"/>
    <property type="match status" value="1"/>
</dbReference>
<dbReference type="InterPro" id="IPR002052">
    <property type="entry name" value="DNA_methylase_N6_adenine_CS"/>
</dbReference>
<dbReference type="InterPro" id="IPR029063">
    <property type="entry name" value="SAM-dependent_MTases_sf"/>
</dbReference>
<dbReference type="InterPro" id="IPR007848">
    <property type="entry name" value="Small_mtfrase_dom"/>
</dbReference>
<dbReference type="InterPro" id="IPR050210">
    <property type="entry name" value="tRNA_Adenine-N(6)_MTase"/>
</dbReference>
<dbReference type="InterPro" id="IPR022882">
    <property type="entry name" value="tRNA_adenine-N6_MeTrfase"/>
</dbReference>
<dbReference type="PANTHER" id="PTHR47739">
    <property type="entry name" value="TRNA1(VAL) (ADENINE(37)-N6)-METHYLTRANSFERASE"/>
    <property type="match status" value="1"/>
</dbReference>
<dbReference type="PANTHER" id="PTHR47739:SF1">
    <property type="entry name" value="TRNA1(VAL) (ADENINE(37)-N6)-METHYLTRANSFERASE"/>
    <property type="match status" value="1"/>
</dbReference>
<dbReference type="Pfam" id="PF05175">
    <property type="entry name" value="MTS"/>
    <property type="match status" value="1"/>
</dbReference>
<dbReference type="SUPFAM" id="SSF53335">
    <property type="entry name" value="S-adenosyl-L-methionine-dependent methyltransferases"/>
    <property type="match status" value="1"/>
</dbReference>
<dbReference type="PROSITE" id="PS00092">
    <property type="entry name" value="N6_MTASE"/>
    <property type="match status" value="1"/>
</dbReference>
<protein>
    <recommendedName>
        <fullName evidence="1">tRNA1(Val) (adenine(37)-N6)-methyltransferase</fullName>
        <ecNumber evidence="1">2.1.1.223</ecNumber>
    </recommendedName>
    <alternativeName>
        <fullName evidence="1">tRNA m6A37 methyltransferase</fullName>
    </alternativeName>
</protein>
<organism>
    <name type="scientific">Vibrio campbellii (strain ATCC BAA-1116)</name>
    <dbReference type="NCBI Taxonomy" id="2902295"/>
    <lineage>
        <taxon>Bacteria</taxon>
        <taxon>Pseudomonadati</taxon>
        <taxon>Pseudomonadota</taxon>
        <taxon>Gammaproteobacteria</taxon>
        <taxon>Vibrionales</taxon>
        <taxon>Vibrionaceae</taxon>
        <taxon>Vibrio</taxon>
    </lineage>
</organism>
<accession>A7MXM2</accession>
<evidence type="ECO:0000255" key="1">
    <source>
        <dbReference type="HAMAP-Rule" id="MF_01872"/>
    </source>
</evidence>
<feature type="chain" id="PRO_0000387445" description="tRNA1(Val) (adenine(37)-N6)-methyltransferase">
    <location>
        <begin position="1"/>
        <end position="239"/>
    </location>
</feature>